<comment type="function">
    <text evidence="2 3">Promotes cell proliferation. Modulates apoptotic pathways. Increases mitogen-activated protein kinase activity. Important for cell migration, and for normal structure and assembly of the Golgi complex. Important for KDR/VEGFR2 signaling. Required for normal cardiovascular development. Required for normal angiogenesis, vasculogenesis and hematopoiesis during embryonic development. Promotes cell proliferation. Modulates apoptotic pathways. Increases mitogen-activated protein kinase activity and STK26 activity. Important for cell migration, and for normal structure and assembly of the Golgi complex. Part of the striatin-interacting phosphatase and kinase (STRIPAK) complexes. STRIPAK complexes have critical roles in protein (de)phosphorylation and are regulators of multiple signaling pathways including Hippo, MAPK, nuclear receptor and cytoskeleton remodeling. Different types of STRIPAK complexes are involved in a variety of biological processes such as cell growth, differentiation, apoptosis, metabolism and immune regulation (By similarity).</text>
</comment>
<comment type="subcellular location">
    <subcellularLocation>
        <location evidence="3">Cytoplasm</location>
    </subcellularLocation>
    <subcellularLocation>
        <location evidence="1">Golgi apparatus membrane</location>
        <topology evidence="1">Peripheral membrane protein</topology>
        <orientation evidence="1">Cytoplasmic side</orientation>
    </subcellularLocation>
    <subcellularLocation>
        <location evidence="1">Cell membrane</location>
        <topology evidence="1">Peripheral membrane protein</topology>
        <orientation evidence="1">Cytoplasmic side</orientation>
    </subcellularLocation>
</comment>
<comment type="similarity">
    <text evidence="4">Belongs to the PDCD10 family.</text>
</comment>
<name>PDC10_XENLA</name>
<evidence type="ECO:0000250" key="1">
    <source>
        <dbReference type="UniProtKB" id="Q6NX65"/>
    </source>
</evidence>
<evidence type="ECO:0000250" key="2">
    <source>
        <dbReference type="UniProtKB" id="Q8VE70"/>
    </source>
</evidence>
<evidence type="ECO:0000250" key="3">
    <source>
        <dbReference type="UniProtKB" id="Q9BUL8"/>
    </source>
</evidence>
<evidence type="ECO:0000305" key="4"/>
<protein>
    <recommendedName>
        <fullName>Programmed cell death protein 10</fullName>
    </recommendedName>
</protein>
<feature type="chain" id="PRO_0000187567" description="Programmed cell death protein 10">
    <location>
        <begin position="1"/>
        <end position="212"/>
    </location>
</feature>
<accession>Q8AVR4</accession>
<sequence length="212" mass="24686">MRMTMEEMKNEAETTSMVSMPLYAVMYPVFNELERVNLSAAQTLRAAFIKAEKENPGLTQDIITKILEKKSVEVNFTESLLRMAADDVEEYMVERPEPEFQELNEKARALKQILSKIPDEINDRVRFLQTIKDIASAIKELLDTVNNVFKKYQYQNRRALEHQKKEFVKYSKSFSDTLKTYFKDGKALNVFISANRLIHQTNLILQTFKTVA</sequence>
<proteinExistence type="evidence at transcript level"/>
<keyword id="KW-0037">Angiogenesis</keyword>
<keyword id="KW-0053">Apoptosis</keyword>
<keyword id="KW-1003">Cell membrane</keyword>
<keyword id="KW-0963">Cytoplasm</keyword>
<keyword id="KW-0333">Golgi apparatus</keyword>
<keyword id="KW-0472">Membrane</keyword>
<keyword id="KW-1185">Reference proteome</keyword>
<organism>
    <name type="scientific">Xenopus laevis</name>
    <name type="common">African clawed frog</name>
    <dbReference type="NCBI Taxonomy" id="8355"/>
    <lineage>
        <taxon>Eukaryota</taxon>
        <taxon>Metazoa</taxon>
        <taxon>Chordata</taxon>
        <taxon>Craniata</taxon>
        <taxon>Vertebrata</taxon>
        <taxon>Euteleostomi</taxon>
        <taxon>Amphibia</taxon>
        <taxon>Batrachia</taxon>
        <taxon>Anura</taxon>
        <taxon>Pipoidea</taxon>
        <taxon>Pipidae</taxon>
        <taxon>Xenopodinae</taxon>
        <taxon>Xenopus</taxon>
        <taxon>Xenopus</taxon>
    </lineage>
</organism>
<reference key="1">
    <citation type="submission" date="2002-12" db="EMBL/GenBank/DDBJ databases">
        <authorList>
            <consortium name="NIH - Xenopus Gene Collection (XGC) project"/>
        </authorList>
    </citation>
    <scope>NUCLEOTIDE SEQUENCE [LARGE SCALE MRNA]</scope>
</reference>
<dbReference type="EMBL" id="BC041501">
    <property type="protein sequence ID" value="AAH41501.1"/>
    <property type="molecule type" value="mRNA"/>
</dbReference>
<dbReference type="RefSeq" id="NP_001080224.1">
    <property type="nucleotide sequence ID" value="NM_001086755.1"/>
</dbReference>
<dbReference type="SMR" id="Q8AVR4"/>
<dbReference type="DNASU" id="379916"/>
<dbReference type="GeneID" id="379916"/>
<dbReference type="KEGG" id="xla:379916"/>
<dbReference type="AGR" id="Xenbase:XB-GENE-1010367"/>
<dbReference type="CTD" id="379916"/>
<dbReference type="Xenbase" id="XB-GENE-1010367">
    <property type="gene designation" value="pdcd10.S"/>
</dbReference>
<dbReference type="OMA" id="HVVLFPI"/>
<dbReference type="OrthoDB" id="6017654at2759"/>
<dbReference type="Proteomes" id="UP000186698">
    <property type="component" value="Chromosome 5S"/>
</dbReference>
<dbReference type="Bgee" id="379916">
    <property type="expression patterns" value="Expressed in blastula and 19 other cell types or tissues"/>
</dbReference>
<dbReference type="GO" id="GO:0090443">
    <property type="term" value="C:FAR/SIN/STRIPAK complex"/>
    <property type="evidence" value="ECO:0000318"/>
    <property type="project" value="GO_Central"/>
</dbReference>
<dbReference type="GO" id="GO:0000139">
    <property type="term" value="C:Golgi membrane"/>
    <property type="evidence" value="ECO:0007669"/>
    <property type="project" value="UniProtKB-SubCell"/>
</dbReference>
<dbReference type="GO" id="GO:0005886">
    <property type="term" value="C:plasma membrane"/>
    <property type="evidence" value="ECO:0007669"/>
    <property type="project" value="UniProtKB-SubCell"/>
</dbReference>
<dbReference type="GO" id="GO:0019901">
    <property type="term" value="F:protein kinase binding"/>
    <property type="evidence" value="ECO:0000318"/>
    <property type="project" value="GO_Central"/>
</dbReference>
<dbReference type="GO" id="GO:0001525">
    <property type="term" value="P:angiogenesis"/>
    <property type="evidence" value="ECO:0007669"/>
    <property type="project" value="UniProtKB-KW"/>
</dbReference>
<dbReference type="GO" id="GO:0006915">
    <property type="term" value="P:apoptotic process"/>
    <property type="evidence" value="ECO:0007669"/>
    <property type="project" value="UniProtKB-KW"/>
</dbReference>
<dbReference type="GO" id="GO:0090168">
    <property type="term" value="P:Golgi reassembly"/>
    <property type="evidence" value="ECO:0000318"/>
    <property type="project" value="GO_Central"/>
</dbReference>
<dbReference type="GO" id="GO:1903358">
    <property type="term" value="P:regulation of Golgi organization"/>
    <property type="evidence" value="ECO:0007669"/>
    <property type="project" value="TreeGrafter"/>
</dbReference>
<dbReference type="FunFam" id="1.10.12.70:FF:000001">
    <property type="entry name" value="Programmed cell death protein 10"/>
    <property type="match status" value="1"/>
</dbReference>
<dbReference type="FunFam" id="1.20.120.330:FF:000006">
    <property type="entry name" value="Programmed cell death protein 10"/>
    <property type="match status" value="1"/>
</dbReference>
<dbReference type="Gene3D" id="1.10.12.70">
    <property type="match status" value="1"/>
</dbReference>
<dbReference type="Gene3D" id="1.20.120.330">
    <property type="entry name" value="Nucleotidyltransferases domain 2"/>
    <property type="match status" value="1"/>
</dbReference>
<dbReference type="InterPro" id="IPR046409">
    <property type="entry name" value="PDC10_dimerisation_sf"/>
</dbReference>
<dbReference type="InterPro" id="IPR009652">
    <property type="entry name" value="PDCD10"/>
</dbReference>
<dbReference type="InterPro" id="IPR048288">
    <property type="entry name" value="PDCD10_N"/>
</dbReference>
<dbReference type="PANTHER" id="PTHR13250:SF1">
    <property type="entry name" value="PROGRAMMED CELL DEATH PROTEIN 10"/>
    <property type="match status" value="1"/>
</dbReference>
<dbReference type="PANTHER" id="PTHR13250">
    <property type="entry name" value="TF-1 CELL APOPTOSIS RELATED PROTEIN-15"/>
    <property type="match status" value="1"/>
</dbReference>
<dbReference type="Pfam" id="PF06840">
    <property type="entry name" value="PDC10_C"/>
    <property type="match status" value="1"/>
</dbReference>
<dbReference type="Pfam" id="PF20929">
    <property type="entry name" value="PDCD10_N"/>
    <property type="match status" value="1"/>
</dbReference>
<gene>
    <name type="primary">pdcd10</name>
</gene>